<protein>
    <recommendedName>
        <fullName evidence="1">DNA-directed RNA polymerase subunit alpha</fullName>
        <shortName evidence="1">RNAP subunit alpha</shortName>
        <ecNumber evidence="1">2.7.7.6</ecNumber>
    </recommendedName>
    <alternativeName>
        <fullName evidence="1">RNA polymerase subunit alpha</fullName>
    </alternativeName>
    <alternativeName>
        <fullName evidence="1">Transcriptase subunit alpha</fullName>
    </alternativeName>
</protein>
<sequence>MQSNTFLTPRIIDVQNISPLHARITMEPFERGYGHTLGNALRRILLSSMPGFAPTEVQISGVVHEYSALDGVQEDVVDILLNLKGIVLKLHNRTEALLTLSKKGEGTVTAGDIEGGHDVEIINPDHVVAHLTSGGKLDMQIKVEMGRGYVPGTVRQLAHESRAIGSILLDASFSPVRRVSYAVESARVEQRTDLDKLVMDIETNGVVDPEEAIRYAAKVLVEQLSVFADLKGTPLPVEQPKLPQIDPVLLRPVDDLELTVRSANCLKAENIYYIGDLIQRTETELLKTPNLGRKSLNEIKEVLASRGLTLGMKLESWPPSNLDKGKKDTSHAAP</sequence>
<proteinExistence type="inferred from homology"/>
<accession>Q2YAX2</accession>
<name>RPOA_NITMU</name>
<organism>
    <name type="scientific">Nitrosospira multiformis (strain ATCC 25196 / NCIMB 11849 / C 71)</name>
    <dbReference type="NCBI Taxonomy" id="323848"/>
    <lineage>
        <taxon>Bacteria</taxon>
        <taxon>Pseudomonadati</taxon>
        <taxon>Pseudomonadota</taxon>
        <taxon>Betaproteobacteria</taxon>
        <taxon>Nitrosomonadales</taxon>
        <taxon>Nitrosomonadaceae</taxon>
        <taxon>Nitrosospira</taxon>
    </lineage>
</organism>
<reference key="1">
    <citation type="submission" date="2005-08" db="EMBL/GenBank/DDBJ databases">
        <title>Complete sequence of chromosome 1 of Nitrosospira multiformis ATCC 25196.</title>
        <authorList>
            <person name="Copeland A."/>
            <person name="Lucas S."/>
            <person name="Lapidus A."/>
            <person name="Barry K."/>
            <person name="Detter J.C."/>
            <person name="Glavina T."/>
            <person name="Hammon N."/>
            <person name="Israni S."/>
            <person name="Pitluck S."/>
            <person name="Chain P."/>
            <person name="Malfatti S."/>
            <person name="Shin M."/>
            <person name="Vergez L."/>
            <person name="Schmutz J."/>
            <person name="Larimer F."/>
            <person name="Land M."/>
            <person name="Hauser L."/>
            <person name="Kyrpides N."/>
            <person name="Lykidis A."/>
            <person name="Richardson P."/>
        </authorList>
    </citation>
    <scope>NUCLEOTIDE SEQUENCE [LARGE SCALE GENOMIC DNA]</scope>
    <source>
        <strain>ATCC 25196 / NCIMB 11849 / C 71</strain>
    </source>
</reference>
<dbReference type="EC" id="2.7.7.6" evidence="1"/>
<dbReference type="EMBL" id="CP000103">
    <property type="protein sequence ID" value="ABB74099.1"/>
    <property type="molecule type" value="Genomic_DNA"/>
</dbReference>
<dbReference type="RefSeq" id="WP_011380148.1">
    <property type="nucleotide sequence ID" value="NC_007614.1"/>
</dbReference>
<dbReference type="SMR" id="Q2YAX2"/>
<dbReference type="STRING" id="323848.Nmul_A0792"/>
<dbReference type="KEGG" id="nmu:Nmul_A0792"/>
<dbReference type="eggNOG" id="COG0202">
    <property type="taxonomic scope" value="Bacteria"/>
</dbReference>
<dbReference type="HOGENOM" id="CLU_053084_0_1_4"/>
<dbReference type="OrthoDB" id="9805706at2"/>
<dbReference type="Proteomes" id="UP000002718">
    <property type="component" value="Chromosome"/>
</dbReference>
<dbReference type="GO" id="GO:0005737">
    <property type="term" value="C:cytoplasm"/>
    <property type="evidence" value="ECO:0007669"/>
    <property type="project" value="UniProtKB-ARBA"/>
</dbReference>
<dbReference type="GO" id="GO:0000428">
    <property type="term" value="C:DNA-directed RNA polymerase complex"/>
    <property type="evidence" value="ECO:0007669"/>
    <property type="project" value="UniProtKB-KW"/>
</dbReference>
<dbReference type="GO" id="GO:0003677">
    <property type="term" value="F:DNA binding"/>
    <property type="evidence" value="ECO:0007669"/>
    <property type="project" value="UniProtKB-UniRule"/>
</dbReference>
<dbReference type="GO" id="GO:0003899">
    <property type="term" value="F:DNA-directed RNA polymerase activity"/>
    <property type="evidence" value="ECO:0007669"/>
    <property type="project" value="UniProtKB-UniRule"/>
</dbReference>
<dbReference type="GO" id="GO:0046983">
    <property type="term" value="F:protein dimerization activity"/>
    <property type="evidence" value="ECO:0007669"/>
    <property type="project" value="InterPro"/>
</dbReference>
<dbReference type="GO" id="GO:0006351">
    <property type="term" value="P:DNA-templated transcription"/>
    <property type="evidence" value="ECO:0007669"/>
    <property type="project" value="UniProtKB-UniRule"/>
</dbReference>
<dbReference type="CDD" id="cd06928">
    <property type="entry name" value="RNAP_alpha_NTD"/>
    <property type="match status" value="1"/>
</dbReference>
<dbReference type="FunFam" id="1.10.150.20:FF:000001">
    <property type="entry name" value="DNA-directed RNA polymerase subunit alpha"/>
    <property type="match status" value="1"/>
</dbReference>
<dbReference type="FunFam" id="2.170.120.12:FF:000001">
    <property type="entry name" value="DNA-directed RNA polymerase subunit alpha"/>
    <property type="match status" value="1"/>
</dbReference>
<dbReference type="Gene3D" id="1.10.150.20">
    <property type="entry name" value="5' to 3' exonuclease, C-terminal subdomain"/>
    <property type="match status" value="1"/>
</dbReference>
<dbReference type="Gene3D" id="2.170.120.12">
    <property type="entry name" value="DNA-directed RNA polymerase, insert domain"/>
    <property type="match status" value="1"/>
</dbReference>
<dbReference type="Gene3D" id="3.30.1360.10">
    <property type="entry name" value="RNA polymerase, RBP11-like subunit"/>
    <property type="match status" value="1"/>
</dbReference>
<dbReference type="HAMAP" id="MF_00059">
    <property type="entry name" value="RNApol_bact_RpoA"/>
    <property type="match status" value="1"/>
</dbReference>
<dbReference type="InterPro" id="IPR011262">
    <property type="entry name" value="DNA-dir_RNA_pol_insert"/>
</dbReference>
<dbReference type="InterPro" id="IPR011263">
    <property type="entry name" value="DNA-dir_RNA_pol_RpoA/D/Rpb3"/>
</dbReference>
<dbReference type="InterPro" id="IPR011773">
    <property type="entry name" value="DNA-dir_RpoA"/>
</dbReference>
<dbReference type="InterPro" id="IPR036603">
    <property type="entry name" value="RBP11-like"/>
</dbReference>
<dbReference type="InterPro" id="IPR011260">
    <property type="entry name" value="RNAP_asu_C"/>
</dbReference>
<dbReference type="InterPro" id="IPR036643">
    <property type="entry name" value="RNApol_insert_sf"/>
</dbReference>
<dbReference type="NCBIfam" id="NF003513">
    <property type="entry name" value="PRK05182.1-2"/>
    <property type="match status" value="1"/>
</dbReference>
<dbReference type="NCBIfam" id="NF003519">
    <property type="entry name" value="PRK05182.2-5"/>
    <property type="match status" value="1"/>
</dbReference>
<dbReference type="NCBIfam" id="TIGR02027">
    <property type="entry name" value="rpoA"/>
    <property type="match status" value="1"/>
</dbReference>
<dbReference type="Pfam" id="PF01000">
    <property type="entry name" value="RNA_pol_A_bac"/>
    <property type="match status" value="1"/>
</dbReference>
<dbReference type="Pfam" id="PF03118">
    <property type="entry name" value="RNA_pol_A_CTD"/>
    <property type="match status" value="1"/>
</dbReference>
<dbReference type="Pfam" id="PF01193">
    <property type="entry name" value="RNA_pol_L"/>
    <property type="match status" value="1"/>
</dbReference>
<dbReference type="SMART" id="SM00662">
    <property type="entry name" value="RPOLD"/>
    <property type="match status" value="1"/>
</dbReference>
<dbReference type="SUPFAM" id="SSF47789">
    <property type="entry name" value="C-terminal domain of RNA polymerase alpha subunit"/>
    <property type="match status" value="1"/>
</dbReference>
<dbReference type="SUPFAM" id="SSF56553">
    <property type="entry name" value="Insert subdomain of RNA polymerase alpha subunit"/>
    <property type="match status" value="1"/>
</dbReference>
<dbReference type="SUPFAM" id="SSF55257">
    <property type="entry name" value="RBP11-like subunits of RNA polymerase"/>
    <property type="match status" value="1"/>
</dbReference>
<feature type="chain" id="PRO_0000264522" description="DNA-directed RNA polymerase subunit alpha">
    <location>
        <begin position="1"/>
        <end position="334"/>
    </location>
</feature>
<feature type="region of interest" description="Alpha N-terminal domain (alpha-NTD)" evidence="1">
    <location>
        <begin position="1"/>
        <end position="231"/>
    </location>
</feature>
<feature type="region of interest" description="Alpha C-terminal domain (alpha-CTD)" evidence="1">
    <location>
        <begin position="245"/>
        <end position="334"/>
    </location>
</feature>
<gene>
    <name evidence="1" type="primary">rpoA</name>
    <name type="ordered locus">Nmul_A0792</name>
</gene>
<evidence type="ECO:0000255" key="1">
    <source>
        <dbReference type="HAMAP-Rule" id="MF_00059"/>
    </source>
</evidence>
<comment type="function">
    <text evidence="1">DNA-dependent RNA polymerase catalyzes the transcription of DNA into RNA using the four ribonucleoside triphosphates as substrates.</text>
</comment>
<comment type="catalytic activity">
    <reaction evidence="1">
        <text>RNA(n) + a ribonucleoside 5'-triphosphate = RNA(n+1) + diphosphate</text>
        <dbReference type="Rhea" id="RHEA:21248"/>
        <dbReference type="Rhea" id="RHEA-COMP:14527"/>
        <dbReference type="Rhea" id="RHEA-COMP:17342"/>
        <dbReference type="ChEBI" id="CHEBI:33019"/>
        <dbReference type="ChEBI" id="CHEBI:61557"/>
        <dbReference type="ChEBI" id="CHEBI:140395"/>
        <dbReference type="EC" id="2.7.7.6"/>
    </reaction>
</comment>
<comment type="subunit">
    <text evidence="1">Homodimer. The RNAP catalytic core consists of 2 alpha, 1 beta, 1 beta' and 1 omega subunit. When a sigma factor is associated with the core the holoenzyme is formed, which can initiate transcription.</text>
</comment>
<comment type="domain">
    <text evidence="1">The N-terminal domain is essential for RNAP assembly and basal transcription, whereas the C-terminal domain is involved in interaction with transcriptional regulators and with upstream promoter elements.</text>
</comment>
<comment type="similarity">
    <text evidence="1">Belongs to the RNA polymerase alpha chain family.</text>
</comment>
<keyword id="KW-0240">DNA-directed RNA polymerase</keyword>
<keyword id="KW-0548">Nucleotidyltransferase</keyword>
<keyword id="KW-1185">Reference proteome</keyword>
<keyword id="KW-0804">Transcription</keyword>
<keyword id="KW-0808">Transferase</keyword>